<dbReference type="EMBL" id="BC076839">
    <property type="protein sequence ID" value="AAH76839.1"/>
    <property type="molecule type" value="mRNA"/>
</dbReference>
<dbReference type="RefSeq" id="NP_001086584.1">
    <property type="nucleotide sequence ID" value="NM_001093115.1"/>
</dbReference>
<dbReference type="SMR" id="Q6DFA1"/>
<dbReference type="DNASU" id="446419"/>
<dbReference type="GeneID" id="446419"/>
<dbReference type="KEGG" id="xla:446419"/>
<dbReference type="AGR" id="Xenbase:XB-GENE-6256234"/>
<dbReference type="CTD" id="446419"/>
<dbReference type="Xenbase" id="XB-GENE-6256234">
    <property type="gene designation" value="dcun1d3.L"/>
</dbReference>
<dbReference type="OrthoDB" id="27198at2759"/>
<dbReference type="Proteomes" id="UP000186698">
    <property type="component" value="Chromosome 9_10L"/>
</dbReference>
<dbReference type="Bgee" id="446419">
    <property type="expression patterns" value="Expressed in blastula and 19 other cell types or tissues"/>
</dbReference>
<dbReference type="GO" id="GO:0005737">
    <property type="term" value="C:cytoplasm"/>
    <property type="evidence" value="ECO:0000250"/>
    <property type="project" value="UniProtKB"/>
</dbReference>
<dbReference type="GO" id="GO:0005634">
    <property type="term" value="C:nucleus"/>
    <property type="evidence" value="ECO:0000250"/>
    <property type="project" value="UniProtKB"/>
</dbReference>
<dbReference type="GO" id="GO:0048471">
    <property type="term" value="C:perinuclear region of cytoplasm"/>
    <property type="evidence" value="ECO:0007669"/>
    <property type="project" value="UniProtKB-SubCell"/>
</dbReference>
<dbReference type="GO" id="GO:0005886">
    <property type="term" value="C:plasma membrane"/>
    <property type="evidence" value="ECO:0000250"/>
    <property type="project" value="UniProtKB"/>
</dbReference>
<dbReference type="GO" id="GO:0000151">
    <property type="term" value="C:ubiquitin ligase complex"/>
    <property type="evidence" value="ECO:0000318"/>
    <property type="project" value="GO_Central"/>
</dbReference>
<dbReference type="GO" id="GO:0097602">
    <property type="term" value="F:cullin family protein binding"/>
    <property type="evidence" value="ECO:0000250"/>
    <property type="project" value="UniProtKB"/>
</dbReference>
<dbReference type="GO" id="GO:0031624">
    <property type="term" value="F:ubiquitin conjugating enzyme binding"/>
    <property type="evidence" value="ECO:0000318"/>
    <property type="project" value="GO_Central"/>
</dbReference>
<dbReference type="GO" id="GO:0032182">
    <property type="term" value="F:ubiquitin-like protein binding"/>
    <property type="evidence" value="ECO:0000318"/>
    <property type="project" value="GO_Central"/>
</dbReference>
<dbReference type="GO" id="GO:2000435">
    <property type="term" value="P:negative regulation of protein neddylation"/>
    <property type="evidence" value="ECO:0000250"/>
    <property type="project" value="UniProtKB"/>
</dbReference>
<dbReference type="GO" id="GO:2000436">
    <property type="term" value="P:positive regulation of protein neddylation"/>
    <property type="evidence" value="ECO:0000250"/>
    <property type="project" value="UniProtKB"/>
</dbReference>
<dbReference type="GO" id="GO:0045116">
    <property type="term" value="P:protein neddylation"/>
    <property type="evidence" value="ECO:0000318"/>
    <property type="project" value="GO_Central"/>
</dbReference>
<dbReference type="GO" id="GO:0010564">
    <property type="term" value="P:regulation of cell cycle process"/>
    <property type="evidence" value="ECO:0000250"/>
    <property type="project" value="UniProtKB"/>
</dbReference>
<dbReference type="GO" id="GO:2000434">
    <property type="term" value="P:regulation of protein neddylation"/>
    <property type="evidence" value="ECO:0000250"/>
    <property type="project" value="UniProtKB"/>
</dbReference>
<dbReference type="FunFam" id="1.10.238.10:FF:000126">
    <property type="entry name" value="DCN1-like protein"/>
    <property type="match status" value="1"/>
</dbReference>
<dbReference type="FunFam" id="1.10.238.200:FF:000003">
    <property type="entry name" value="DCN1-like protein 3"/>
    <property type="match status" value="1"/>
</dbReference>
<dbReference type="Gene3D" id="1.10.238.200">
    <property type="entry name" value="Cullin, PONY binding domain"/>
    <property type="match status" value="1"/>
</dbReference>
<dbReference type="Gene3D" id="1.10.238.10">
    <property type="entry name" value="EF-hand"/>
    <property type="match status" value="1"/>
</dbReference>
<dbReference type="InterPro" id="IPR014764">
    <property type="entry name" value="DCN-prot"/>
</dbReference>
<dbReference type="InterPro" id="IPR042460">
    <property type="entry name" value="DCN1-like_PONY"/>
</dbReference>
<dbReference type="InterPro" id="IPR005176">
    <property type="entry name" value="PONY_dom"/>
</dbReference>
<dbReference type="PANTHER" id="PTHR12281:SF31">
    <property type="entry name" value="DCN1-LIKE PROTEIN 3"/>
    <property type="match status" value="1"/>
</dbReference>
<dbReference type="PANTHER" id="PTHR12281">
    <property type="entry name" value="RP42 RELATED"/>
    <property type="match status" value="1"/>
</dbReference>
<dbReference type="Pfam" id="PF03556">
    <property type="entry name" value="Cullin_binding"/>
    <property type="match status" value="1"/>
</dbReference>
<dbReference type="PROSITE" id="PS51229">
    <property type="entry name" value="DCUN1"/>
    <property type="match status" value="1"/>
</dbReference>
<protein>
    <recommendedName>
        <fullName evidence="1">DCN1-like protein 3</fullName>
        <shortName evidence="1">DCNL3</shortName>
    </recommendedName>
    <alternativeName>
        <fullName>DCUN1 domain-containing protein 3</fullName>
    </alternativeName>
    <alternativeName>
        <fullName>Defective in cullin neddylation protein 1-like protein 3</fullName>
    </alternativeName>
</protein>
<comment type="function">
    <text evidence="1">Contributes to the neddylation of all cullins by transferring NEDD8 from N-terminally acetylated NEDD8-conjugating E2s enzyme to different cullin C-terminal domain-RBX complexes. At the cell membrane, can promote and as well inhibit cullins neddylation.</text>
</comment>
<comment type="subunit">
    <text evidence="1">May interact (via the DCUN1 domain) with unneddylated cullins.</text>
</comment>
<comment type="subcellular location">
    <subcellularLocation>
        <location evidence="1">Cell membrane</location>
    </subcellularLocation>
    <subcellularLocation>
        <location evidence="1">Cytoplasm</location>
    </subcellularLocation>
    <subcellularLocation>
        <location evidence="1">Nucleus</location>
    </subcellularLocation>
    <subcellularLocation>
        <location evidence="1">Cytoplasm</location>
        <location evidence="1">Perinuclear region</location>
    </subcellularLocation>
</comment>
<comment type="domain">
    <text evidence="1">The DCUN1 domain, also known as PONY domain, mediates the interaction with different cullins.</text>
</comment>
<sequence>MGQCVTKCKNPSSTLGSKNGERESSKPHKRSSSHKEEHMSICGKASGEILVNGTKKGDASLEASQPLAVGVDTKKKEQGVGAELSSLQRIEELFRRYKDEREDAILEEGMERFCDDLCVDPTEFRVLVLAWKFQAATMCKFTRREFFEGCKSINADGIESICSQFPGLLNEAKQEDKFKDLYRFTFQFGLDSEEGQRSLHREIAIALWKLVFTQNKPLILDQWLEFLTENPSGIKGISRDTWNMFLNFTQVIGPDLSNYSEDEAWPSLFDTFVEWEMERRKSEEKTDCIPCLGTDHQSRDEQT</sequence>
<proteinExistence type="evidence at transcript level"/>
<keyword id="KW-1003">Cell membrane</keyword>
<keyword id="KW-0963">Cytoplasm</keyword>
<keyword id="KW-0449">Lipoprotein</keyword>
<keyword id="KW-0472">Membrane</keyword>
<keyword id="KW-0519">Myristate</keyword>
<keyword id="KW-0539">Nucleus</keyword>
<keyword id="KW-1185">Reference proteome</keyword>
<evidence type="ECO:0000250" key="1">
    <source>
        <dbReference type="UniProtKB" id="Q8IWE4"/>
    </source>
</evidence>
<evidence type="ECO:0000255" key="2"/>
<evidence type="ECO:0000255" key="3">
    <source>
        <dbReference type="PROSITE-ProRule" id="PRU00574"/>
    </source>
</evidence>
<evidence type="ECO:0000256" key="4">
    <source>
        <dbReference type="SAM" id="MobiDB-lite"/>
    </source>
</evidence>
<reference key="1">
    <citation type="submission" date="2004-07" db="EMBL/GenBank/DDBJ databases">
        <authorList>
            <consortium name="NIH - Xenopus Gene Collection (XGC) project"/>
        </authorList>
    </citation>
    <scope>NUCLEOTIDE SEQUENCE [LARGE SCALE MRNA]</scope>
    <source>
        <tissue>Oocyte</tissue>
    </source>
</reference>
<organism>
    <name type="scientific">Xenopus laevis</name>
    <name type="common">African clawed frog</name>
    <dbReference type="NCBI Taxonomy" id="8355"/>
    <lineage>
        <taxon>Eukaryota</taxon>
        <taxon>Metazoa</taxon>
        <taxon>Chordata</taxon>
        <taxon>Craniata</taxon>
        <taxon>Vertebrata</taxon>
        <taxon>Euteleostomi</taxon>
        <taxon>Amphibia</taxon>
        <taxon>Batrachia</taxon>
        <taxon>Anura</taxon>
        <taxon>Pipoidea</taxon>
        <taxon>Pipidae</taxon>
        <taxon>Xenopodinae</taxon>
        <taxon>Xenopus</taxon>
        <taxon>Xenopus</taxon>
    </lineage>
</organism>
<feature type="initiator methionine" description="Removed" evidence="2">
    <location>
        <position position="1"/>
    </location>
</feature>
<feature type="chain" id="PRO_0000320053" description="DCN1-like protein 3">
    <location>
        <begin position="2"/>
        <end position="303"/>
    </location>
</feature>
<feature type="domain" description="DCUN1" evidence="3">
    <location>
        <begin position="85"/>
        <end position="277"/>
    </location>
</feature>
<feature type="region of interest" description="Disordered" evidence="4">
    <location>
        <begin position="1"/>
        <end position="40"/>
    </location>
</feature>
<feature type="lipid moiety-binding region" description="N-myristoyl glycine" evidence="1 2">
    <location>
        <position position="2"/>
    </location>
</feature>
<name>DCNL3_XENLA</name>
<gene>
    <name evidence="1" type="primary">dcun1d3</name>
</gene>
<accession>Q6DFA1</accession>